<comment type="function">
    <text evidence="1">Ubiquitin-like modifier protein which binds to a number of as yet unidentified target proteins.</text>
</comment>
<comment type="similarity">
    <text evidence="3">Belongs to the UFM1 family.</text>
</comment>
<feature type="chain" id="PRO_0000392007" description="Ubiquitin-fold modifier 1">
    <location>
        <begin position="1"/>
        <end position="83"/>
    </location>
</feature>
<feature type="propeptide" id="PRO_0000392008" description="Removed in mature form" evidence="1">
    <location>
        <position position="84"/>
    </location>
</feature>
<feature type="cross-link" description="Glycyl lysine isopeptide (Gly-Lys) (interchain with K-? in acceptor proteins)" evidence="2">
    <location>
        <position position="83"/>
    </location>
</feature>
<accession>B4GBR1</accession>
<dbReference type="EMBL" id="CH479181">
    <property type="protein sequence ID" value="EDW32319.1"/>
    <property type="molecule type" value="Genomic_DNA"/>
</dbReference>
<dbReference type="SMR" id="B4GBR1"/>
<dbReference type="STRING" id="7234.B4GBR1"/>
<dbReference type="EnsemblMetazoa" id="FBtr0177188">
    <property type="protein sequence ID" value="FBpp0175680"/>
    <property type="gene ID" value="FBgn0149182"/>
</dbReference>
<dbReference type="EnsemblMetazoa" id="XM_002016393.2">
    <property type="protein sequence ID" value="XP_002016429.1"/>
    <property type="gene ID" value="LOC6590416"/>
</dbReference>
<dbReference type="GeneID" id="6590416"/>
<dbReference type="KEGG" id="dpe:6590416"/>
<dbReference type="CTD" id="51569"/>
<dbReference type="eggNOG" id="KOG3483">
    <property type="taxonomic scope" value="Eukaryota"/>
</dbReference>
<dbReference type="HOGENOM" id="CLU_175114_0_0_1"/>
<dbReference type="OMA" id="MEHAVGK"/>
<dbReference type="OrthoDB" id="284357at2759"/>
<dbReference type="PhylomeDB" id="B4GBR1"/>
<dbReference type="Proteomes" id="UP000008744">
    <property type="component" value="Unassembled WGS sequence"/>
</dbReference>
<dbReference type="GO" id="GO:0005829">
    <property type="term" value="C:cytosol"/>
    <property type="evidence" value="ECO:0007669"/>
    <property type="project" value="EnsemblMetazoa"/>
</dbReference>
<dbReference type="GO" id="GO:0005634">
    <property type="term" value="C:nucleus"/>
    <property type="evidence" value="ECO:0007669"/>
    <property type="project" value="TreeGrafter"/>
</dbReference>
<dbReference type="GO" id="GO:0031386">
    <property type="term" value="F:protein tag activity"/>
    <property type="evidence" value="ECO:0007669"/>
    <property type="project" value="EnsemblMetazoa"/>
</dbReference>
<dbReference type="GO" id="GO:0050905">
    <property type="term" value="P:neuromuscular process"/>
    <property type="evidence" value="ECO:0007669"/>
    <property type="project" value="EnsemblMetazoa"/>
</dbReference>
<dbReference type="GO" id="GO:1990592">
    <property type="term" value="P:protein K69-linked ufmylation"/>
    <property type="evidence" value="ECO:0007669"/>
    <property type="project" value="TreeGrafter"/>
</dbReference>
<dbReference type="CDD" id="cd01766">
    <property type="entry name" value="Ubl_UFM1"/>
    <property type="match status" value="1"/>
</dbReference>
<dbReference type="FunFam" id="3.10.20.90:FF:000044">
    <property type="entry name" value="Ubiquitin-fold modifier 1"/>
    <property type="match status" value="1"/>
</dbReference>
<dbReference type="Gene3D" id="3.10.20.90">
    <property type="entry name" value="Phosphatidylinositol 3-kinase Catalytic Subunit, Chain A, domain 1"/>
    <property type="match status" value="1"/>
</dbReference>
<dbReference type="InterPro" id="IPR029071">
    <property type="entry name" value="Ubiquitin-like_domsf"/>
</dbReference>
<dbReference type="InterPro" id="IPR005375">
    <property type="entry name" value="UFM1"/>
</dbReference>
<dbReference type="PANTHER" id="PTHR15825">
    <property type="entry name" value="UBIQUITIN-FOLD MODIFIER 1"/>
    <property type="match status" value="1"/>
</dbReference>
<dbReference type="PANTHER" id="PTHR15825:SF0">
    <property type="entry name" value="UBIQUITIN-FOLD MODIFIER 1"/>
    <property type="match status" value="1"/>
</dbReference>
<dbReference type="Pfam" id="PF03671">
    <property type="entry name" value="Ufm1"/>
    <property type="match status" value="1"/>
</dbReference>
<dbReference type="PIRSF" id="PIRSF038027">
    <property type="entry name" value="Ubiquitin-like_Ufm1"/>
    <property type="match status" value="1"/>
</dbReference>
<dbReference type="SUPFAM" id="SSF54236">
    <property type="entry name" value="Ubiquitin-like"/>
    <property type="match status" value="1"/>
</dbReference>
<proteinExistence type="inferred from homology"/>
<name>UFM1_DROPE</name>
<protein>
    <recommendedName>
        <fullName>Ubiquitin-fold modifier 1</fullName>
    </recommendedName>
</protein>
<reference key="1">
    <citation type="journal article" date="2007" name="Nature">
        <title>Evolution of genes and genomes on the Drosophila phylogeny.</title>
        <authorList>
            <consortium name="Drosophila 12 genomes consortium"/>
        </authorList>
    </citation>
    <scope>NUCLEOTIDE SEQUENCE [LARGE SCALE GENOMIC DNA]</scope>
    <source>
        <strain>MSH-3 / Tucson 14011-0111.49</strain>
    </source>
</reference>
<organism>
    <name type="scientific">Drosophila persimilis</name>
    <name type="common">Fruit fly</name>
    <dbReference type="NCBI Taxonomy" id="7234"/>
    <lineage>
        <taxon>Eukaryota</taxon>
        <taxon>Metazoa</taxon>
        <taxon>Ecdysozoa</taxon>
        <taxon>Arthropoda</taxon>
        <taxon>Hexapoda</taxon>
        <taxon>Insecta</taxon>
        <taxon>Pterygota</taxon>
        <taxon>Neoptera</taxon>
        <taxon>Endopterygota</taxon>
        <taxon>Diptera</taxon>
        <taxon>Brachycera</taxon>
        <taxon>Muscomorpha</taxon>
        <taxon>Ephydroidea</taxon>
        <taxon>Drosophilidae</taxon>
        <taxon>Drosophila</taxon>
        <taxon>Sophophora</taxon>
    </lineage>
</organism>
<evidence type="ECO:0000250" key="1"/>
<evidence type="ECO:0000255" key="2"/>
<evidence type="ECO:0000305" key="3"/>
<gene>
    <name type="ORF">GL11573</name>
</gene>
<keyword id="KW-1017">Isopeptide bond</keyword>
<keyword id="KW-1185">Reference proteome</keyword>
<keyword id="KW-0833">Ubl conjugation pathway</keyword>
<sequence length="84" mass="9110">MSKVTFKITLTSDPKLPFKVLSVPEGTPFTAVLKFASEEFKVPAETSAIITDDGIGISPQQTAGNVFLKHGSELRLIPRDRVGH</sequence>